<dbReference type="EMBL" id="AE000512">
    <property type="protein sequence ID" value="AAD36546.1"/>
    <property type="molecule type" value="Genomic_DNA"/>
</dbReference>
<dbReference type="PIR" id="H72247">
    <property type="entry name" value="H72247"/>
</dbReference>
<dbReference type="RefSeq" id="NP_229280.1">
    <property type="nucleotide sequence ID" value="NC_000853.1"/>
</dbReference>
<dbReference type="RefSeq" id="WP_004081795.1">
    <property type="nucleotide sequence ID" value="NC_000853.1"/>
</dbReference>
<dbReference type="PDB" id="3DIN">
    <property type="method" value="X-ray"/>
    <property type="resolution" value="4.50 A"/>
    <property type="chains" value="C/F=1-431"/>
</dbReference>
<dbReference type="PDBsum" id="3DIN"/>
<dbReference type="SMR" id="Q9X1I9"/>
<dbReference type="DIP" id="DIP-59807N"/>
<dbReference type="FunCoup" id="Q9X1I9">
    <property type="interactions" value="406"/>
</dbReference>
<dbReference type="IntAct" id="Q9X1I9">
    <property type="interactions" value="3"/>
</dbReference>
<dbReference type="STRING" id="243274.TM_1480"/>
<dbReference type="TCDB" id="3.A.5.1.4">
    <property type="family name" value="the general secretory pathway (sec) family"/>
</dbReference>
<dbReference type="PaxDb" id="243274-THEMA_06900"/>
<dbReference type="EnsemblBacteria" id="AAD36546">
    <property type="protein sequence ID" value="AAD36546"/>
    <property type="gene ID" value="TM_1480"/>
</dbReference>
<dbReference type="KEGG" id="tma:TM1480"/>
<dbReference type="KEGG" id="tmi:THEMA_06900"/>
<dbReference type="KEGG" id="tmm:Tmari_1488"/>
<dbReference type="KEGG" id="tmw:THMA_1512"/>
<dbReference type="eggNOG" id="COG0201">
    <property type="taxonomic scope" value="Bacteria"/>
</dbReference>
<dbReference type="InParanoid" id="Q9X1I9"/>
<dbReference type="OrthoDB" id="9809248at2"/>
<dbReference type="EvolutionaryTrace" id="Q9X1I9"/>
<dbReference type="Proteomes" id="UP000008183">
    <property type="component" value="Chromosome"/>
</dbReference>
<dbReference type="GO" id="GO:0031522">
    <property type="term" value="C:cell envelope Sec protein transport complex"/>
    <property type="evidence" value="ECO:0000318"/>
    <property type="project" value="GO_Central"/>
</dbReference>
<dbReference type="GO" id="GO:0005886">
    <property type="term" value="C:plasma membrane"/>
    <property type="evidence" value="ECO:0000318"/>
    <property type="project" value="GO_Central"/>
</dbReference>
<dbReference type="GO" id="GO:0008320">
    <property type="term" value="F:protein transmembrane transporter activity"/>
    <property type="evidence" value="ECO:0000318"/>
    <property type="project" value="GO_Central"/>
</dbReference>
<dbReference type="GO" id="GO:0005048">
    <property type="term" value="F:signal sequence binding"/>
    <property type="evidence" value="ECO:0000318"/>
    <property type="project" value="GO_Central"/>
</dbReference>
<dbReference type="GO" id="GO:0043952">
    <property type="term" value="P:protein transport by the Sec complex"/>
    <property type="evidence" value="ECO:0007669"/>
    <property type="project" value="UniProtKB-UniRule"/>
</dbReference>
<dbReference type="GO" id="GO:0006616">
    <property type="term" value="P:SRP-dependent cotranslational protein targeting to membrane, translocation"/>
    <property type="evidence" value="ECO:0000318"/>
    <property type="project" value="GO_Central"/>
</dbReference>
<dbReference type="FunFam" id="1.10.3370.10:FF:000001">
    <property type="entry name" value="Preprotein translocase subunit SecY"/>
    <property type="match status" value="1"/>
</dbReference>
<dbReference type="Gene3D" id="1.10.3370.10">
    <property type="entry name" value="SecY subunit domain"/>
    <property type="match status" value="1"/>
</dbReference>
<dbReference type="HAMAP" id="MF_01465">
    <property type="entry name" value="SecY"/>
    <property type="match status" value="1"/>
</dbReference>
<dbReference type="InterPro" id="IPR026593">
    <property type="entry name" value="SecY"/>
</dbReference>
<dbReference type="InterPro" id="IPR002208">
    <property type="entry name" value="SecY/SEC61-alpha"/>
</dbReference>
<dbReference type="InterPro" id="IPR030659">
    <property type="entry name" value="SecY_CS"/>
</dbReference>
<dbReference type="InterPro" id="IPR023201">
    <property type="entry name" value="SecY_dom_sf"/>
</dbReference>
<dbReference type="NCBIfam" id="TIGR00967">
    <property type="entry name" value="3a0501s007"/>
    <property type="match status" value="1"/>
</dbReference>
<dbReference type="PANTHER" id="PTHR10906">
    <property type="entry name" value="SECY/SEC61-ALPHA FAMILY MEMBER"/>
    <property type="match status" value="1"/>
</dbReference>
<dbReference type="Pfam" id="PF00344">
    <property type="entry name" value="SecY"/>
    <property type="match status" value="1"/>
</dbReference>
<dbReference type="PIRSF" id="PIRSF004557">
    <property type="entry name" value="SecY"/>
    <property type="match status" value="1"/>
</dbReference>
<dbReference type="PRINTS" id="PR00303">
    <property type="entry name" value="SECYTRNLCASE"/>
</dbReference>
<dbReference type="SUPFAM" id="SSF103491">
    <property type="entry name" value="Preprotein translocase SecY subunit"/>
    <property type="match status" value="1"/>
</dbReference>
<dbReference type="PROSITE" id="PS00755">
    <property type="entry name" value="SECY_1"/>
    <property type="match status" value="1"/>
</dbReference>
<dbReference type="PROSITE" id="PS00756">
    <property type="entry name" value="SECY_2"/>
    <property type="match status" value="1"/>
</dbReference>
<comment type="function">
    <text>The central subunit of the protein translocation channel SecYEG. Consists of two halves formed by TMs 1-5 and 6-10. These two domains form a lateral gate at the front which open onto the bilayer between TMs 2 and 7, and are clamped together by SecE at the back. The channel is closed by both a pore ring composed of hydrophobic SecY resides and a short helix (helix 2A) on the extracellular side of the membrane which forms a plug. The plug probably moves laterally to allow the channel to open. The ring and the pore may move independently.</text>
</comment>
<comment type="subunit">
    <text evidence="1">Component of the Sec protein translocase complex. Heterotrimer consisting of SecY, SecE and SecG subunits. The heterotrimers can form oligomers, although 1 heterotrimer is thought to be able to translocate proteins. Interacts with the ribosome. Interacts with SecDF, and other proteins may be involved. Interacts with SecA.</text>
</comment>
<comment type="subcellular location">
    <subcellularLocation>
        <location>Cell inner membrane</location>
        <topology>Multi-pass membrane protein</topology>
    </subcellularLocation>
</comment>
<comment type="similarity">
    <text evidence="2">Belongs to the SecY/SEC61-alpha family.</text>
</comment>
<organism>
    <name type="scientific">Thermotoga maritima (strain ATCC 43589 / DSM 3109 / JCM 10099 / NBRC 100826 / MSB8)</name>
    <dbReference type="NCBI Taxonomy" id="243274"/>
    <lineage>
        <taxon>Bacteria</taxon>
        <taxon>Thermotogati</taxon>
        <taxon>Thermotogota</taxon>
        <taxon>Thermotogae</taxon>
        <taxon>Thermotogales</taxon>
        <taxon>Thermotogaceae</taxon>
        <taxon>Thermotoga</taxon>
    </lineage>
</organism>
<keyword id="KW-0002">3D-structure</keyword>
<keyword id="KW-0997">Cell inner membrane</keyword>
<keyword id="KW-1003">Cell membrane</keyword>
<keyword id="KW-0472">Membrane</keyword>
<keyword id="KW-0653">Protein transport</keyword>
<keyword id="KW-1185">Reference proteome</keyword>
<keyword id="KW-0811">Translocation</keyword>
<keyword id="KW-0812">Transmembrane</keyword>
<keyword id="KW-1133">Transmembrane helix</keyword>
<keyword id="KW-0813">Transport</keyword>
<gene>
    <name type="primary">secY</name>
    <name type="ordered locus">TM_1480</name>
</gene>
<proteinExistence type="evidence at protein level"/>
<sequence length="431" mass="48170">MWQAFKNAFKIPELRDRIIFTFLALIVFRMGIYIPVPGLNLEAWGEIFRRIAETAGVAGILSFYDVFTGGALSRFSVFTMSVTPYITASIILQLLASVMPSLKEMLREGEEGRKKFAKYTRRLTLLIGGFQAFFVSFSLARSNPDMVAPGVNVLQFTVLSTMSMLAGTMFLLWLGERITEKGIGNGISILIFAGIVARYPSYIRQAYLGGLNLLEWIFLIAVALITIFGIILVQQAERRITIQYARRVTGRRVYGGASTYLPIKVNQGGVIPIIFASAIVSIPSAIASITNNETLKNLFRAGGFLYLLIYGLLVFFFTYFYSVVIFDPREISENIRKYGGYIPGLRPGRSTEQYLHRVLNRVTFIGAVFLVVIALLPYLVQGAIKVNVWIGGTSALIAVGVALDIIQQMETHMVMRHYEGFIKKGKIRGRR</sequence>
<name>SECY_THEMA</name>
<protein>
    <recommendedName>
        <fullName>Protein translocase subunit SecY</fullName>
    </recommendedName>
</protein>
<feature type="chain" id="PRO_0000414213" description="Protein translocase subunit SecY">
    <location>
        <begin position="1"/>
        <end position="431"/>
    </location>
</feature>
<feature type="topological domain" description="Cytoplasmic">
    <location>
        <begin position="1"/>
        <end position="17"/>
    </location>
</feature>
<feature type="transmembrane region" description="Helical; Name=Helix 1">
    <location>
        <begin position="18"/>
        <end position="32"/>
    </location>
</feature>
<feature type="topological domain" description="Periplasmic">
    <location>
        <begin position="33"/>
        <end position="73"/>
    </location>
</feature>
<feature type="transmembrane region" description="Discontinuously helical; Name=Helix 2">
    <location>
        <begin position="74"/>
        <end position="95"/>
    </location>
</feature>
<feature type="intramembrane region" description="Helical; Name=Helix 2A">
    <location>
        <begin position="74"/>
        <end position="77"/>
    </location>
</feature>
<feature type="intramembrane region">
    <location>
        <begin position="78"/>
        <end position="84"/>
    </location>
</feature>
<feature type="intramembrane region" description="Helical; Name=Helix 2B">
    <location>
        <begin position="85"/>
        <end position="95"/>
    </location>
</feature>
<feature type="topological domain" description="Cytoplasmic">
    <location>
        <begin position="96"/>
        <end position="120"/>
    </location>
</feature>
<feature type="transmembrane region" description="Helical; Name=Helix 3">
    <location>
        <begin position="121"/>
        <end position="133"/>
    </location>
</feature>
<feature type="topological domain" description="Periplasmic">
    <location>
        <begin position="134"/>
        <end position="161"/>
    </location>
</feature>
<feature type="transmembrane region" description="Helical; Name=Helix 4">
    <location>
        <begin position="162"/>
        <end position="178"/>
    </location>
</feature>
<feature type="topological domain" description="Cytoplasmic">
    <location>
        <begin position="179"/>
        <end position="182"/>
    </location>
</feature>
<feature type="transmembrane region" description="Helical; Name=Helix 5">
    <location>
        <begin position="183"/>
        <end position="198"/>
    </location>
</feature>
<feature type="topological domain" description="Periplasmic">
    <location>
        <begin position="199"/>
        <end position="213"/>
    </location>
</feature>
<feature type="transmembrane region" description="Helical; Name=Helix 6">
    <location>
        <begin position="214"/>
        <end position="226"/>
    </location>
</feature>
<feature type="topological domain" description="Cytoplasmic">
    <location>
        <begin position="227"/>
        <end position="270"/>
    </location>
</feature>
<feature type="transmembrane region" description="Helical; Name=Helix 7">
    <location>
        <begin position="271"/>
        <end position="283"/>
    </location>
</feature>
<feature type="topological domain" description="Periplasmic">
    <location>
        <begin position="284"/>
        <end position="302"/>
    </location>
</feature>
<feature type="transmembrane region" description="Helical; Name=Helix 8">
    <location>
        <begin position="303"/>
        <end position="315"/>
    </location>
</feature>
<feature type="topological domain" description="Cytoplasmic">
    <location>
        <begin position="316"/>
        <end position="367"/>
    </location>
</feature>
<feature type="transmembrane region" description="Helical; Name=Helix 9">
    <location>
        <begin position="368"/>
        <end position="382"/>
    </location>
</feature>
<feature type="topological domain" description="Periplasmic">
    <location>
        <begin position="383"/>
        <end position="389"/>
    </location>
</feature>
<feature type="transmembrane region" description="Helical; Name=Helix 10">
    <location>
        <begin position="390"/>
        <end position="403"/>
    </location>
</feature>
<feature type="topological domain" description="Cytoplasmic">
    <location>
        <begin position="404"/>
        <end position="431"/>
    </location>
</feature>
<reference key="1">
    <citation type="journal article" date="1999" name="Nature">
        <title>Evidence for lateral gene transfer between Archaea and Bacteria from genome sequence of Thermotoga maritima.</title>
        <authorList>
            <person name="Nelson K.E."/>
            <person name="Clayton R.A."/>
            <person name="Gill S.R."/>
            <person name="Gwinn M.L."/>
            <person name="Dodson R.J."/>
            <person name="Haft D.H."/>
            <person name="Hickey E.K."/>
            <person name="Peterson J.D."/>
            <person name="Nelson W.C."/>
            <person name="Ketchum K.A."/>
            <person name="McDonald L.A."/>
            <person name="Utterback T.R."/>
            <person name="Malek J.A."/>
            <person name="Linher K.D."/>
            <person name="Garrett M.M."/>
            <person name="Stewart A.M."/>
            <person name="Cotton M.D."/>
            <person name="Pratt M.S."/>
            <person name="Phillips C.A."/>
            <person name="Richardson D.L."/>
            <person name="Heidelberg J.F."/>
            <person name="Sutton G.G."/>
            <person name="Fleischmann R.D."/>
            <person name="Eisen J.A."/>
            <person name="White O."/>
            <person name="Salzberg S.L."/>
            <person name="Smith H.O."/>
            <person name="Venter J.C."/>
            <person name="Fraser C.M."/>
        </authorList>
    </citation>
    <scope>NUCLEOTIDE SEQUENCE [LARGE SCALE GENOMIC DNA]</scope>
    <source>
        <strain>ATCC 43589 / DSM 3109 / JCM 10099 / NBRC 100826 / MSB8</strain>
    </source>
</reference>
<reference key="2">
    <citation type="journal article" date="2008" name="Nature">
        <title>Structure of a complex of the ATPase SecA and the protein-translocation channel.</title>
        <authorList>
            <person name="Zimmer J."/>
            <person name="Nam Y."/>
            <person name="Rapoport T.A."/>
        </authorList>
    </citation>
    <scope>X-RAY CRYSTALLOGRAPHY (4.50 ANGSTROMS) OF SECYEG IN COMPLEX WITH SECA</scope>
</reference>
<evidence type="ECO:0000269" key="1">
    <source>
    </source>
</evidence>
<evidence type="ECO:0000305" key="2"/>
<accession>Q9X1I9</accession>